<feature type="chain" id="PRO_0000055588" description="Putative heme-binding peroxidase">
    <location>
        <begin position="1"/>
        <end position="331"/>
    </location>
</feature>
<feature type="region of interest" description="Disordered" evidence="4">
    <location>
        <begin position="288"/>
        <end position="331"/>
    </location>
</feature>
<feature type="compositionally biased region" description="Polar residues" evidence="4">
    <location>
        <begin position="306"/>
        <end position="316"/>
    </location>
</feature>
<feature type="active site" description="Proton acceptor" evidence="2 3">
    <location>
        <position position="50"/>
    </location>
</feature>
<feature type="active site" description="Tryptophan radical intermediate" evidence="1">
    <location>
        <position position="190"/>
    </location>
</feature>
<feature type="binding site" description="axial binding residue" evidence="2">
    <location>
        <position position="174"/>
    </location>
    <ligand>
        <name>heme b</name>
        <dbReference type="ChEBI" id="CHEBI:60344"/>
    </ligand>
    <ligandPart>
        <name>Fe</name>
        <dbReference type="ChEBI" id="CHEBI:18248"/>
    </ligandPart>
</feature>
<feature type="site" description="Transition state stabilizer" evidence="2">
    <location>
        <position position="46"/>
    </location>
</feature>
<sequence>MGIVDQPQSKGQESTPGDFAAVQKSIIDLLNQPDYDDGSAGPVLVRLAWHSSGTYDKVTDTGGSNGAGMRYEAEGGDPANAGLQNARVFLEPVKRLHPWITYSDLWTLAGVTAIHAMGGPEIDWLPGRTDFVDDSKLPPRGRLPDAAQGAEHIRHIFYRMGFNDREIVALSGAHNLGRCHTANSGFEGKWVNNPTRFSNQYFRLLLSETWTEKTIPESGLLQFSSVDQDTEEELMMLPTDIALTTDSEFSKYVQLYAKDKDVFFQDFKKAFAKLLELGIARNSEGKVINTDNQKGGYRSAPKKSDSTPATSGQPGASKTGGCPVMHHKAKL</sequence>
<comment type="function">
    <text evidence="1">Destroys radicals which are normally produced within the cells and which are toxic to biological systems.</text>
</comment>
<comment type="cofactor">
    <cofactor evidence="2">
        <name>heme b</name>
        <dbReference type="ChEBI" id="CHEBI:60344"/>
    </cofactor>
    <text evidence="2">Binds 1 heme b (iron(II)-protoporphyrin IX) group per subunit.</text>
</comment>
<comment type="similarity">
    <text evidence="5">Belongs to the peroxidase family. Cytochrome c peroxidase subfamily.</text>
</comment>
<reference key="1">
    <citation type="journal article" date="2007" name="Science">
        <title>The Fusarium graminearum genome reveals a link between localized polymorphism and pathogen specialization.</title>
        <authorList>
            <person name="Cuomo C.A."/>
            <person name="Gueldener U."/>
            <person name="Xu J.-R."/>
            <person name="Trail F."/>
            <person name="Turgeon B.G."/>
            <person name="Di Pietro A."/>
            <person name="Walton J.D."/>
            <person name="Ma L.-J."/>
            <person name="Baker S.E."/>
            <person name="Rep M."/>
            <person name="Adam G."/>
            <person name="Antoniw J."/>
            <person name="Baldwin T."/>
            <person name="Calvo S.E."/>
            <person name="Chang Y.-L."/>
            <person name="DeCaprio D."/>
            <person name="Gale L.R."/>
            <person name="Gnerre S."/>
            <person name="Goswami R.S."/>
            <person name="Hammond-Kosack K."/>
            <person name="Harris L.J."/>
            <person name="Hilburn K."/>
            <person name="Kennell J.C."/>
            <person name="Kroken S."/>
            <person name="Magnuson J.K."/>
            <person name="Mannhaupt G."/>
            <person name="Mauceli E.W."/>
            <person name="Mewes H.-W."/>
            <person name="Mitterbauer R."/>
            <person name="Muehlbauer G."/>
            <person name="Muensterkoetter M."/>
            <person name="Nelson D."/>
            <person name="O'Donnell K."/>
            <person name="Ouellet T."/>
            <person name="Qi W."/>
            <person name="Quesneville H."/>
            <person name="Roncero M.I.G."/>
            <person name="Seong K.-Y."/>
            <person name="Tetko I.V."/>
            <person name="Urban M."/>
            <person name="Waalwijk C."/>
            <person name="Ward T.J."/>
            <person name="Yao J."/>
            <person name="Birren B.W."/>
            <person name="Kistler H.C."/>
        </authorList>
    </citation>
    <scope>NUCLEOTIDE SEQUENCE [LARGE SCALE GENOMIC DNA]</scope>
    <source>
        <strain>ATCC MYA-4620 / CBS 123657 / FGSC 9075 / NRRL 31084 / PH-1</strain>
    </source>
</reference>
<reference key="2">
    <citation type="journal article" date="2010" name="Nature">
        <title>Comparative genomics reveals mobile pathogenicity chromosomes in Fusarium.</title>
        <authorList>
            <person name="Ma L.-J."/>
            <person name="van der Does H.C."/>
            <person name="Borkovich K.A."/>
            <person name="Coleman J.J."/>
            <person name="Daboussi M.-J."/>
            <person name="Di Pietro A."/>
            <person name="Dufresne M."/>
            <person name="Freitag M."/>
            <person name="Grabherr M."/>
            <person name="Henrissat B."/>
            <person name="Houterman P.M."/>
            <person name="Kang S."/>
            <person name="Shim W.-B."/>
            <person name="Woloshuk C."/>
            <person name="Xie X."/>
            <person name="Xu J.-R."/>
            <person name="Antoniw J."/>
            <person name="Baker S.E."/>
            <person name="Bluhm B.H."/>
            <person name="Breakspear A."/>
            <person name="Brown D.W."/>
            <person name="Butchko R.A.E."/>
            <person name="Chapman S."/>
            <person name="Coulson R."/>
            <person name="Coutinho P.M."/>
            <person name="Danchin E.G.J."/>
            <person name="Diener A."/>
            <person name="Gale L.R."/>
            <person name="Gardiner D.M."/>
            <person name="Goff S."/>
            <person name="Hammond-Kosack K.E."/>
            <person name="Hilburn K."/>
            <person name="Hua-Van A."/>
            <person name="Jonkers W."/>
            <person name="Kazan K."/>
            <person name="Kodira C.D."/>
            <person name="Koehrsen M."/>
            <person name="Kumar L."/>
            <person name="Lee Y.-H."/>
            <person name="Li L."/>
            <person name="Manners J.M."/>
            <person name="Miranda-Saavedra D."/>
            <person name="Mukherjee M."/>
            <person name="Park G."/>
            <person name="Park J."/>
            <person name="Park S.-Y."/>
            <person name="Proctor R.H."/>
            <person name="Regev A."/>
            <person name="Ruiz-Roldan M.C."/>
            <person name="Sain D."/>
            <person name="Sakthikumar S."/>
            <person name="Sykes S."/>
            <person name="Schwartz D.C."/>
            <person name="Turgeon B.G."/>
            <person name="Wapinski I."/>
            <person name="Yoder O."/>
            <person name="Young S."/>
            <person name="Zeng Q."/>
            <person name="Zhou S."/>
            <person name="Galagan J."/>
            <person name="Cuomo C.A."/>
            <person name="Kistler H.C."/>
            <person name="Rep M."/>
        </authorList>
    </citation>
    <scope>GENOME REANNOTATION</scope>
    <source>
        <strain>ATCC MYA-4620 / CBS 123657 / FGSC 9075 / NRRL 31084 / PH-1</strain>
    </source>
</reference>
<reference key="3">
    <citation type="journal article" date="2015" name="BMC Genomics">
        <title>The completed genome sequence of the pathogenic ascomycete fungus Fusarium graminearum.</title>
        <authorList>
            <person name="King R."/>
            <person name="Urban M."/>
            <person name="Hammond-Kosack M.C.U."/>
            <person name="Hassani-Pak K."/>
            <person name="Hammond-Kosack K.E."/>
        </authorList>
    </citation>
    <scope>NUCLEOTIDE SEQUENCE [LARGE SCALE GENOMIC DNA]</scope>
    <source>
        <strain>ATCC MYA-4620 / CBS 123657 / FGSC 9075 / NRRL 31084 / PH-1</strain>
    </source>
</reference>
<protein>
    <recommendedName>
        <fullName>Putative heme-binding peroxidase</fullName>
        <ecNumber>1.11.1.-</ecNumber>
    </recommendedName>
</protein>
<proteinExistence type="inferred from homology"/>
<dbReference type="EC" id="1.11.1.-"/>
<dbReference type="EMBL" id="DS231669">
    <property type="protein sequence ID" value="ESU17348.1"/>
    <property type="molecule type" value="Genomic_DNA"/>
</dbReference>
<dbReference type="EMBL" id="HG970332">
    <property type="protein sequence ID" value="CEF76060.1"/>
    <property type="molecule type" value="Genomic_DNA"/>
</dbReference>
<dbReference type="RefSeq" id="XP_011319610.1">
    <property type="nucleotide sequence ID" value="XM_011321308.1"/>
</dbReference>
<dbReference type="SMR" id="Q4HWQ2"/>
<dbReference type="STRING" id="229533.Q4HWQ2"/>
<dbReference type="PeroxiBase" id="3391">
    <property type="entry name" value="GzCcP01"/>
</dbReference>
<dbReference type="GeneID" id="23557505"/>
<dbReference type="KEGG" id="fgr:FGSG_10606"/>
<dbReference type="VEuPathDB" id="FungiDB:FGRAMPH1_01G08515"/>
<dbReference type="eggNOG" id="ENOG502QR1E">
    <property type="taxonomic scope" value="Eukaryota"/>
</dbReference>
<dbReference type="HOGENOM" id="CLU_036959_0_1_1"/>
<dbReference type="InParanoid" id="Q4HWQ2"/>
<dbReference type="OrthoDB" id="14901at110618"/>
<dbReference type="Proteomes" id="UP000070720">
    <property type="component" value="Chromosome 1"/>
</dbReference>
<dbReference type="GO" id="GO:0020037">
    <property type="term" value="F:heme binding"/>
    <property type="evidence" value="ECO:0007669"/>
    <property type="project" value="InterPro"/>
</dbReference>
<dbReference type="GO" id="GO:0046872">
    <property type="term" value="F:metal ion binding"/>
    <property type="evidence" value="ECO:0007669"/>
    <property type="project" value="UniProtKB-KW"/>
</dbReference>
<dbReference type="GO" id="GO:0004601">
    <property type="term" value="F:peroxidase activity"/>
    <property type="evidence" value="ECO:0007669"/>
    <property type="project" value="UniProtKB-KW"/>
</dbReference>
<dbReference type="GO" id="GO:0034599">
    <property type="term" value="P:cellular response to oxidative stress"/>
    <property type="evidence" value="ECO:0007669"/>
    <property type="project" value="InterPro"/>
</dbReference>
<dbReference type="GO" id="GO:0042744">
    <property type="term" value="P:hydrogen peroxide catabolic process"/>
    <property type="evidence" value="ECO:0007669"/>
    <property type="project" value="TreeGrafter"/>
</dbReference>
<dbReference type="GO" id="GO:0000302">
    <property type="term" value="P:response to reactive oxygen species"/>
    <property type="evidence" value="ECO:0007669"/>
    <property type="project" value="TreeGrafter"/>
</dbReference>
<dbReference type="CDD" id="cd00691">
    <property type="entry name" value="ascorbate_peroxidase"/>
    <property type="match status" value="1"/>
</dbReference>
<dbReference type="FunFam" id="1.10.420.10:FF:000009">
    <property type="entry name" value="Ascorbate peroxidase"/>
    <property type="match status" value="1"/>
</dbReference>
<dbReference type="FunFam" id="1.10.520.10:FF:000005">
    <property type="entry name" value="Cytochrome c peroxidase"/>
    <property type="match status" value="1"/>
</dbReference>
<dbReference type="Gene3D" id="1.10.520.10">
    <property type="match status" value="1"/>
</dbReference>
<dbReference type="Gene3D" id="1.10.420.10">
    <property type="entry name" value="Peroxidase, domain 2"/>
    <property type="match status" value="1"/>
</dbReference>
<dbReference type="InterPro" id="IPR044831">
    <property type="entry name" value="Ccp1-like"/>
</dbReference>
<dbReference type="InterPro" id="IPR002016">
    <property type="entry name" value="Haem_peroxidase"/>
</dbReference>
<dbReference type="InterPro" id="IPR010255">
    <property type="entry name" value="Haem_peroxidase_sf"/>
</dbReference>
<dbReference type="InterPro" id="IPR002207">
    <property type="entry name" value="Peroxidase_I"/>
</dbReference>
<dbReference type="InterPro" id="IPR019794">
    <property type="entry name" value="Peroxidases_AS"/>
</dbReference>
<dbReference type="InterPro" id="IPR019793">
    <property type="entry name" value="Peroxidases_heam-ligand_BS"/>
</dbReference>
<dbReference type="PANTHER" id="PTHR31356:SF36">
    <property type="entry name" value="L-ASCORBATE PEROXIDASE 3"/>
    <property type="match status" value="1"/>
</dbReference>
<dbReference type="PANTHER" id="PTHR31356">
    <property type="entry name" value="THYLAKOID LUMENAL 29 KDA PROTEIN, CHLOROPLASTIC-RELATED"/>
    <property type="match status" value="1"/>
</dbReference>
<dbReference type="Pfam" id="PF00141">
    <property type="entry name" value="peroxidase"/>
    <property type="match status" value="1"/>
</dbReference>
<dbReference type="PRINTS" id="PR00459">
    <property type="entry name" value="ASPEROXIDASE"/>
</dbReference>
<dbReference type="PRINTS" id="PR00458">
    <property type="entry name" value="PEROXIDASE"/>
</dbReference>
<dbReference type="SUPFAM" id="SSF48113">
    <property type="entry name" value="Heme-dependent peroxidases"/>
    <property type="match status" value="1"/>
</dbReference>
<dbReference type="PROSITE" id="PS00435">
    <property type="entry name" value="PEROXIDASE_1"/>
    <property type="match status" value="1"/>
</dbReference>
<dbReference type="PROSITE" id="PS00436">
    <property type="entry name" value="PEROXIDASE_2"/>
    <property type="match status" value="1"/>
</dbReference>
<dbReference type="PROSITE" id="PS50873">
    <property type="entry name" value="PEROXIDASE_4"/>
    <property type="match status" value="1"/>
</dbReference>
<keyword id="KW-0349">Heme</keyword>
<keyword id="KW-0408">Iron</keyword>
<keyword id="KW-0479">Metal-binding</keyword>
<keyword id="KW-0560">Oxidoreductase</keyword>
<keyword id="KW-0575">Peroxidase</keyword>
<keyword id="KW-1185">Reference proteome</keyword>
<organism>
    <name type="scientific">Gibberella zeae (strain ATCC MYA-4620 / CBS 123657 / FGSC 9075 / NRRL 31084 / PH-1)</name>
    <name type="common">Wheat head blight fungus</name>
    <name type="synonym">Fusarium graminearum</name>
    <dbReference type="NCBI Taxonomy" id="229533"/>
    <lineage>
        <taxon>Eukaryota</taxon>
        <taxon>Fungi</taxon>
        <taxon>Dikarya</taxon>
        <taxon>Ascomycota</taxon>
        <taxon>Pezizomycotina</taxon>
        <taxon>Sordariomycetes</taxon>
        <taxon>Hypocreomycetidae</taxon>
        <taxon>Hypocreales</taxon>
        <taxon>Nectriaceae</taxon>
        <taxon>Fusarium</taxon>
    </lineage>
</organism>
<gene>
    <name type="ORF">FGRRES_10606</name>
    <name type="ORF">FGSG_10606</name>
</gene>
<accession>Q4HWQ2</accession>
<accession>A0A098DC88</accession>
<accession>A0A0E0RXT5</accession>
<accession>V6RS28</accession>
<name>CCPR2_GIBZE</name>
<evidence type="ECO:0000250" key="1"/>
<evidence type="ECO:0000255" key="2">
    <source>
        <dbReference type="PROSITE-ProRule" id="PRU00297"/>
    </source>
</evidence>
<evidence type="ECO:0000255" key="3">
    <source>
        <dbReference type="PROSITE-ProRule" id="PRU10012"/>
    </source>
</evidence>
<evidence type="ECO:0000256" key="4">
    <source>
        <dbReference type="SAM" id="MobiDB-lite"/>
    </source>
</evidence>
<evidence type="ECO:0000305" key="5"/>